<evidence type="ECO:0000250" key="1"/>
<evidence type="ECO:0000255" key="2">
    <source>
        <dbReference type="PROSITE-ProRule" id="PRU00381"/>
    </source>
</evidence>
<dbReference type="EMBL" id="DQ067534">
    <property type="protein sequence ID" value="AAZ39863.1"/>
    <property type="molecule type" value="Genomic_DNA"/>
</dbReference>
<dbReference type="EMBL" id="DQ067532">
    <property type="protein sequence ID" value="AAZ39863.1"/>
    <property type="status" value="JOINED"/>
    <property type="molecule type" value="Genomic_DNA"/>
</dbReference>
<dbReference type="EMBL" id="DQ067533">
    <property type="protein sequence ID" value="AAZ39863.1"/>
    <property type="status" value="JOINED"/>
    <property type="molecule type" value="Genomic_DNA"/>
</dbReference>
<dbReference type="SMR" id="Q2VL53"/>
<dbReference type="OrthoDB" id="3225452at2759"/>
<dbReference type="GO" id="GO:0005634">
    <property type="term" value="C:nucleus"/>
    <property type="evidence" value="ECO:0007669"/>
    <property type="project" value="UniProtKB-SubCell"/>
</dbReference>
<dbReference type="GO" id="GO:0000981">
    <property type="term" value="F:DNA-binding transcription factor activity, RNA polymerase II-specific"/>
    <property type="evidence" value="ECO:0007669"/>
    <property type="project" value="TreeGrafter"/>
</dbReference>
<dbReference type="GO" id="GO:0000978">
    <property type="term" value="F:RNA polymerase II cis-regulatory region sequence-specific DNA binding"/>
    <property type="evidence" value="ECO:0007669"/>
    <property type="project" value="TreeGrafter"/>
</dbReference>
<dbReference type="CDD" id="cd00131">
    <property type="entry name" value="PAX"/>
    <property type="match status" value="1"/>
</dbReference>
<dbReference type="FunFam" id="1.10.10.10:FF:000003">
    <property type="entry name" value="Paired box protein Pax-6"/>
    <property type="match status" value="1"/>
</dbReference>
<dbReference type="FunFam" id="1.10.10.10:FF:000084">
    <property type="entry name" value="paired box protein Pax-9"/>
    <property type="match status" value="1"/>
</dbReference>
<dbReference type="Gene3D" id="1.10.10.10">
    <property type="entry name" value="Winged helix-like DNA-binding domain superfamily/Winged helix DNA-binding domain"/>
    <property type="match status" value="2"/>
</dbReference>
<dbReference type="InterPro" id="IPR009057">
    <property type="entry name" value="Homeodomain-like_sf"/>
</dbReference>
<dbReference type="InterPro" id="IPR043182">
    <property type="entry name" value="PAIRED_DNA-bd_dom"/>
</dbReference>
<dbReference type="InterPro" id="IPR001523">
    <property type="entry name" value="Paired_dom"/>
</dbReference>
<dbReference type="InterPro" id="IPR043565">
    <property type="entry name" value="PAX_fam"/>
</dbReference>
<dbReference type="InterPro" id="IPR036388">
    <property type="entry name" value="WH-like_DNA-bd_sf"/>
</dbReference>
<dbReference type="PANTHER" id="PTHR45636">
    <property type="entry name" value="PAIRED BOX PROTEIN PAX-6-RELATED-RELATED"/>
    <property type="match status" value="1"/>
</dbReference>
<dbReference type="PANTHER" id="PTHR45636:SF13">
    <property type="entry name" value="PAIRED BOX PROTEIN PAX-9"/>
    <property type="match status" value="1"/>
</dbReference>
<dbReference type="Pfam" id="PF00292">
    <property type="entry name" value="PAX"/>
    <property type="match status" value="1"/>
</dbReference>
<dbReference type="PRINTS" id="PR00027">
    <property type="entry name" value="PAIREDBOX"/>
</dbReference>
<dbReference type="SMART" id="SM00351">
    <property type="entry name" value="PAX"/>
    <property type="match status" value="1"/>
</dbReference>
<dbReference type="SUPFAM" id="SSF46689">
    <property type="entry name" value="Homeodomain-like"/>
    <property type="match status" value="1"/>
</dbReference>
<dbReference type="PROSITE" id="PS00034">
    <property type="entry name" value="PAIRED_1"/>
    <property type="match status" value="1"/>
</dbReference>
<dbReference type="PROSITE" id="PS51057">
    <property type="entry name" value="PAIRED_2"/>
    <property type="match status" value="1"/>
</dbReference>
<protein>
    <recommendedName>
        <fullName>Paired box protein Pax-9</fullName>
    </recommendedName>
</protein>
<keyword id="KW-0217">Developmental protein</keyword>
<keyword id="KW-0238">DNA-binding</keyword>
<keyword id="KW-0539">Nucleus</keyword>
<keyword id="KW-0563">Paired box</keyword>
<keyword id="KW-0804">Transcription</keyword>
<keyword id="KW-0805">Transcription regulation</keyword>
<comment type="function">
    <text evidence="1">Transcription factor required for normal development of thymus, parathyroid glands, ultimobranchial bodies, teeth, skeletal elements of skull and larynx as well as distal limbs.</text>
</comment>
<comment type="subunit">
    <text evidence="1">Interacts with KDM5B.</text>
</comment>
<comment type="subcellular location">
    <subcellularLocation>
        <location>Nucleus</location>
    </subcellularLocation>
</comment>
<proteinExistence type="inferred from homology"/>
<accession>Q2VL53</accession>
<reference key="1">
    <citation type="journal article" date="2006" name="Mol. Biol. Evol.">
        <title>Molecular evolution of the primate developmental genes MSX1 and PAX9.</title>
        <authorList>
            <person name="Perry G.H."/>
            <person name="Verrelli B.C."/>
            <person name="Stone A.C."/>
        </authorList>
    </citation>
    <scope>NUCLEOTIDE SEQUENCE [GENOMIC DNA]</scope>
    <source>
        <strain>Isolate 6261</strain>
    </source>
</reference>
<name>PAX9_DAUMA</name>
<organism>
    <name type="scientific">Daubentonia madagascariensis</name>
    <name type="common">Aye-aye</name>
    <name type="synonym">Sciurus madagascariensis</name>
    <dbReference type="NCBI Taxonomy" id="31869"/>
    <lineage>
        <taxon>Eukaryota</taxon>
        <taxon>Metazoa</taxon>
        <taxon>Chordata</taxon>
        <taxon>Craniata</taxon>
        <taxon>Vertebrata</taxon>
        <taxon>Euteleostomi</taxon>
        <taxon>Mammalia</taxon>
        <taxon>Eutheria</taxon>
        <taxon>Euarchontoglires</taxon>
        <taxon>Primates</taxon>
        <taxon>Strepsirrhini</taxon>
        <taxon>Chiromyiformes</taxon>
        <taxon>Daubentoniidae</taxon>
        <taxon>Daubentonia</taxon>
    </lineage>
</organism>
<sequence>MEPAFGEVNQLGGVFVNGRPLPNAIRLRIVELAQLGIRPCDISRQLRVSHGCVSKILARYNETGSILPGAIGGSKPRVTTPTVVKHIRTYKQRDPGIFAWEIRDRLLADGVCDKYNVPSVSSISRILRNKIGNLAQQGHYDSYKQHQPAPQPALPYNHIYSYPSPITAAAAKVPTPPGVPAIPGSVAMPRTWPSSHSVTDILGIRSITDQVSDSSPYHSPKVEEWSSLGRNNFPAAAPHAVNGLEKGALEQEAKYGQAPNGLPAVSSFVSASSMAPYPTPAQVSPYMTYSAAPSGYVAGHGWQHAGGTPLSPHNCDIPASLAFKGMQAAREGSHSVTASAL</sequence>
<gene>
    <name type="primary">PAX9</name>
</gene>
<feature type="chain" id="PRO_0000050202" description="Paired box protein Pax-9">
    <location>
        <begin position="1"/>
        <end position="341"/>
    </location>
</feature>
<feature type="DNA-binding region" description="Paired" evidence="2">
    <location>
        <begin position="4"/>
        <end position="130"/>
    </location>
</feature>
<feature type="region of interest" description="PAI subdomain" evidence="2">
    <location>
        <begin position="7"/>
        <end position="63"/>
    </location>
</feature>
<feature type="region of interest" description="RED subdomain" evidence="2">
    <location>
        <begin position="82"/>
        <end position="130"/>
    </location>
</feature>
<feature type="region of interest" description="Interaction with KDM5B" evidence="1">
    <location>
        <begin position="168"/>
        <end position="189"/>
    </location>
</feature>